<name>SDRC_STAAR</name>
<sequence>MNNKKTATNRKGMIPNRLNKFSIRKYSVGTASILVGTTLIFGLSGHEAKAAEHTNGELNQSKNEATAPSENKTTEKVDSRQQNNVEQSTTSNQPKVNESDNTSVKETTEEPQNTTSTQPTKKNNDATANKDNLAAQNISTQANDVSATPKTTTIKPRTLNRMAVNTVAAPQQGTNVNDKVHFSNIDIAIDKGHVNSTTGKTEFWATSSDVLKLKANYTIDDSVKEGDTFTFKYGQYFRPGSVRLPSQTQNLYNAQGNIIAKGIYDSTTNTTTYTFTNYVDQYTNVSGSFEQVAFAKRENATTDKTAYKMEVTLGNDAYSEEIIVDYGNKKAQPLISSTNYINNEDLSRNMTVYVNQPKNTYTKETFVSTLTGYKFNPDAKNFKIYEVTDQNQFVDSFTPDTSKLIDVTDKFKITYSNDNKTATVDLMNGQTNSNKQYIIQQVAYPDNTSTDNGKIDYTLDTDKTKYSWSNSYSSVNGSSTANGDQKKYNLGDYVWEDTNKDGKQDANEKGIKGVYVILKDSNGKELDRTTTDENGKYQFTGLGNGTYSVEFSTLAGYTPTTVNAGTDDAVDSDGLTTTGVIKDADNMTLDSGFYKTPKYSLGDYVWYDSNKDGKQDSTEKGIKGVKVTLQNEKGEVIGTTETDENGKYRFDNLDSGKYKVIFEKPAGLKQTGTNTTEDDKDADGGEVDVTITDHDDFTLDNGYFEEETSDSDSDSDSDSDSDSDSDSDSDSDSESDSDSDSDSDSDSDSDSDSDSDSDSDSESDSDSDSDSDSDSDSDSDSDSDSDSDSDSDSDSDSDSDSDSDSDSDSDSDSDSDSDSDSDSDSDSDSDSDSDSDSDSDSDSDSDAGKHTPVKPMSATKDHHNKAKALPETGSENNGSNNATLFGGLFAALGSLLLFGRRKKQNK</sequence>
<gene>
    <name type="primary">sdrC</name>
    <name type="ordered locus">SAR0566</name>
</gene>
<keyword id="KW-0106">Calcium</keyword>
<keyword id="KW-0134">Cell wall</keyword>
<keyword id="KW-0572">Peptidoglycan-anchor</keyword>
<keyword id="KW-0677">Repeat</keyword>
<keyword id="KW-0964">Secreted</keyword>
<keyword id="KW-0732">Signal</keyword>
<reference key="1">
    <citation type="journal article" date="2004" name="Proc. Natl. Acad. Sci. U.S.A.">
        <title>Complete genomes of two clinical Staphylococcus aureus strains: evidence for the rapid evolution of virulence and drug resistance.</title>
        <authorList>
            <person name="Holden M.T.G."/>
            <person name="Feil E.J."/>
            <person name="Lindsay J.A."/>
            <person name="Peacock S.J."/>
            <person name="Day N.P.J."/>
            <person name="Enright M.C."/>
            <person name="Foster T.J."/>
            <person name="Moore C.E."/>
            <person name="Hurst L."/>
            <person name="Atkin R."/>
            <person name="Barron A."/>
            <person name="Bason N."/>
            <person name="Bentley S.D."/>
            <person name="Chillingworth C."/>
            <person name="Chillingworth T."/>
            <person name="Churcher C."/>
            <person name="Clark L."/>
            <person name="Corton C."/>
            <person name="Cronin A."/>
            <person name="Doggett J."/>
            <person name="Dowd L."/>
            <person name="Feltwell T."/>
            <person name="Hance Z."/>
            <person name="Harris B."/>
            <person name="Hauser H."/>
            <person name="Holroyd S."/>
            <person name="Jagels K."/>
            <person name="James K.D."/>
            <person name="Lennard N."/>
            <person name="Line A."/>
            <person name="Mayes R."/>
            <person name="Moule S."/>
            <person name="Mungall K."/>
            <person name="Ormond D."/>
            <person name="Quail M.A."/>
            <person name="Rabbinowitsch E."/>
            <person name="Rutherford K.M."/>
            <person name="Sanders M."/>
            <person name="Sharp S."/>
            <person name="Simmonds M."/>
            <person name="Stevens K."/>
            <person name="Whitehead S."/>
            <person name="Barrell B.G."/>
            <person name="Spratt B.G."/>
            <person name="Parkhill J."/>
        </authorList>
    </citation>
    <scope>NUCLEOTIDE SEQUENCE [LARGE SCALE GENOMIC DNA]</scope>
    <source>
        <strain>MRSA252</strain>
    </source>
</reference>
<proteinExistence type="inferred from homology"/>
<evidence type="ECO:0000250" key="1">
    <source>
        <dbReference type="UniProtKB" id="O86487"/>
    </source>
</evidence>
<evidence type="ECO:0000255" key="2"/>
<evidence type="ECO:0000255" key="3">
    <source>
        <dbReference type="PROSITE-ProRule" id="PRU00477"/>
    </source>
</evidence>
<evidence type="ECO:0000256" key="4">
    <source>
        <dbReference type="SAM" id="MobiDB-lite"/>
    </source>
</evidence>
<evidence type="ECO:0000305" key="5"/>
<feature type="signal peptide" evidence="2">
    <location>
        <begin position="1"/>
        <end position="50"/>
    </location>
</feature>
<feature type="chain" id="PRO_0000281396" description="Serine-aspartate repeat-containing protein C">
    <location>
        <begin position="51"/>
        <end position="872"/>
    </location>
</feature>
<feature type="propeptide" id="PRO_0000281397" description="Removed by sortase" evidence="3">
    <location>
        <begin position="873"/>
        <end position="906"/>
    </location>
</feature>
<feature type="domain" description="CNA-B 1">
    <location>
        <begin position="487"/>
        <end position="597"/>
    </location>
</feature>
<feature type="domain" description="CNA-B 2">
    <location>
        <begin position="598"/>
        <end position="708"/>
    </location>
</feature>
<feature type="region of interest" description="Ligand binding A region">
    <location>
        <begin position="51"/>
        <end position="486"/>
    </location>
</feature>
<feature type="region of interest" description="Disordered" evidence="4">
    <location>
        <begin position="51"/>
        <end position="127"/>
    </location>
</feature>
<feature type="region of interest" description="Disordered" evidence="4">
    <location>
        <begin position="669"/>
        <end position="881"/>
    </location>
</feature>
<feature type="short sequence motif" description="LPXTG sorting signal" evidence="3">
    <location>
        <begin position="869"/>
        <end position="873"/>
    </location>
</feature>
<feature type="compositionally biased region" description="Polar residues" evidence="4">
    <location>
        <begin position="56"/>
        <end position="71"/>
    </location>
</feature>
<feature type="compositionally biased region" description="Polar residues" evidence="4">
    <location>
        <begin position="80"/>
        <end position="119"/>
    </location>
</feature>
<feature type="compositionally biased region" description="Acidic residues" evidence="4">
    <location>
        <begin position="676"/>
        <end position="686"/>
    </location>
</feature>
<feature type="compositionally biased region" description="Acidic residues" evidence="4">
    <location>
        <begin position="703"/>
        <end position="845"/>
    </location>
</feature>
<feature type="modified residue" description="Pentaglycyl murein peptidoglycan amidated threonine" evidence="3">
    <location>
        <position position="872"/>
    </location>
</feature>
<organism>
    <name type="scientific">Staphylococcus aureus (strain MRSA252)</name>
    <dbReference type="NCBI Taxonomy" id="282458"/>
    <lineage>
        <taxon>Bacteria</taxon>
        <taxon>Bacillati</taxon>
        <taxon>Bacillota</taxon>
        <taxon>Bacilli</taxon>
        <taxon>Bacillales</taxon>
        <taxon>Staphylococcaceae</taxon>
        <taxon>Staphylococcus</taxon>
    </lineage>
</organism>
<comment type="function">
    <text evidence="1">Cell surface-associated calcium-binding protein which plays an important role in adhesion and pathogenesis. Mediates interactions with components of the extracellular matrix such as host NRXN1 to promote bacterial adhesion.</text>
</comment>
<comment type="subunit">
    <text evidence="1">Homodimerizes; via N2-Domain. Interacts with host NRXN1; this interaction mediates bacterial attachment to host cells.</text>
</comment>
<comment type="subcellular location">
    <subcellularLocation>
        <location evidence="3">Secreted</location>
        <location evidence="3">Cell wall</location>
        <topology evidence="3">Peptidoglycan-anchor</topology>
    </subcellularLocation>
</comment>
<comment type="similarity">
    <text evidence="5">Belongs to the serine-aspartate repeat-containing protein (SDr) family.</text>
</comment>
<dbReference type="EMBL" id="BX571856">
    <property type="protein sequence ID" value="CAG39587.1"/>
    <property type="molecule type" value="Genomic_DNA"/>
</dbReference>
<dbReference type="RefSeq" id="WP_001060422.1">
    <property type="nucleotide sequence ID" value="NC_002952.2"/>
</dbReference>
<dbReference type="SMR" id="Q6GJA7"/>
<dbReference type="KEGG" id="sar:SAR0566"/>
<dbReference type="HOGENOM" id="CLU_004137_1_2_9"/>
<dbReference type="PRO" id="PR:Q6GJA7"/>
<dbReference type="Proteomes" id="UP000000596">
    <property type="component" value="Chromosome"/>
</dbReference>
<dbReference type="GO" id="GO:0005576">
    <property type="term" value="C:extracellular region"/>
    <property type="evidence" value="ECO:0007669"/>
    <property type="project" value="UniProtKB-KW"/>
</dbReference>
<dbReference type="GO" id="GO:0007155">
    <property type="term" value="P:cell adhesion"/>
    <property type="evidence" value="ECO:0007669"/>
    <property type="project" value="InterPro"/>
</dbReference>
<dbReference type="Gene3D" id="2.60.40.1280">
    <property type="match status" value="1"/>
</dbReference>
<dbReference type="Gene3D" id="2.60.40.1290">
    <property type="match status" value="1"/>
</dbReference>
<dbReference type="Gene3D" id="2.60.40.10">
    <property type="entry name" value="Immunoglobulins"/>
    <property type="match status" value="2"/>
</dbReference>
<dbReference type="InterPro" id="IPR011266">
    <property type="entry name" value="Adhesin_Fg-bd_dom_2"/>
</dbReference>
<dbReference type="InterPro" id="IPR008966">
    <property type="entry name" value="Adhesion_dom_sf"/>
</dbReference>
<dbReference type="InterPro" id="IPR011252">
    <property type="entry name" value="Fibrogen-bd_dom1"/>
</dbReference>
<dbReference type="InterPro" id="IPR013783">
    <property type="entry name" value="Ig-like_fold"/>
</dbReference>
<dbReference type="InterPro" id="IPR019931">
    <property type="entry name" value="LPXTG_anchor"/>
</dbReference>
<dbReference type="InterPro" id="IPR050972">
    <property type="entry name" value="SDr-like"/>
</dbReference>
<dbReference type="InterPro" id="IPR033764">
    <property type="entry name" value="Sdr_B"/>
</dbReference>
<dbReference type="InterPro" id="IPR041171">
    <property type="entry name" value="SDR_Ig"/>
</dbReference>
<dbReference type="InterPro" id="IPR005877">
    <property type="entry name" value="YSIRK_signal_dom"/>
</dbReference>
<dbReference type="NCBIfam" id="TIGR01167">
    <property type="entry name" value="LPXTG_anchor"/>
    <property type="match status" value="1"/>
</dbReference>
<dbReference type="NCBIfam" id="TIGR01168">
    <property type="entry name" value="YSIRK_signal"/>
    <property type="match status" value="1"/>
</dbReference>
<dbReference type="PANTHER" id="PTHR34403">
    <property type="entry name" value="TOL-PAL SYSTEM PROTEIN TOLA"/>
    <property type="match status" value="1"/>
</dbReference>
<dbReference type="PANTHER" id="PTHR34403:SF8">
    <property type="entry name" value="TOL-PAL SYSTEM PROTEIN TOLA"/>
    <property type="match status" value="1"/>
</dbReference>
<dbReference type="Pfam" id="PF17961">
    <property type="entry name" value="Big_8"/>
    <property type="match status" value="1"/>
</dbReference>
<dbReference type="Pfam" id="PF00746">
    <property type="entry name" value="Gram_pos_anchor"/>
    <property type="match status" value="1"/>
</dbReference>
<dbReference type="Pfam" id="PF17210">
    <property type="entry name" value="SdrD_B"/>
    <property type="match status" value="2"/>
</dbReference>
<dbReference type="Pfam" id="PF10425">
    <property type="entry name" value="SdrG_C_C"/>
    <property type="match status" value="1"/>
</dbReference>
<dbReference type="Pfam" id="PF04650">
    <property type="entry name" value="YSIRK_signal"/>
    <property type="match status" value="1"/>
</dbReference>
<dbReference type="SUPFAM" id="SSF49401">
    <property type="entry name" value="Bacterial adhesins"/>
    <property type="match status" value="2"/>
</dbReference>
<dbReference type="SUPFAM" id="SSF117074">
    <property type="entry name" value="Hypothetical protein PA1324"/>
    <property type="match status" value="2"/>
</dbReference>
<dbReference type="PROSITE" id="PS50847">
    <property type="entry name" value="GRAM_POS_ANCHORING"/>
    <property type="match status" value="1"/>
</dbReference>
<accession>Q6GJA7</accession>
<protein>
    <recommendedName>
        <fullName>Serine-aspartate repeat-containing protein C</fullName>
    </recommendedName>
</protein>